<organism>
    <name type="scientific">Yersinia pestis bv. Antiqua (strain Nepal516)</name>
    <dbReference type="NCBI Taxonomy" id="377628"/>
    <lineage>
        <taxon>Bacteria</taxon>
        <taxon>Pseudomonadati</taxon>
        <taxon>Pseudomonadota</taxon>
        <taxon>Gammaproteobacteria</taxon>
        <taxon>Enterobacterales</taxon>
        <taxon>Yersiniaceae</taxon>
        <taxon>Yersinia</taxon>
    </lineage>
</organism>
<reference key="1">
    <citation type="journal article" date="2006" name="J. Bacteriol.">
        <title>Complete genome sequence of Yersinia pestis strains Antiqua and Nepal516: evidence of gene reduction in an emerging pathogen.</title>
        <authorList>
            <person name="Chain P.S.G."/>
            <person name="Hu P."/>
            <person name="Malfatti S.A."/>
            <person name="Radnedge L."/>
            <person name="Larimer F."/>
            <person name="Vergez L.M."/>
            <person name="Worsham P."/>
            <person name="Chu M.C."/>
            <person name="Andersen G.L."/>
        </authorList>
    </citation>
    <scope>NUCLEOTIDE SEQUENCE [LARGE SCALE GENOMIC DNA]</scope>
    <source>
        <strain>Nepal516</strain>
    </source>
</reference>
<reference key="2">
    <citation type="submission" date="2009-04" db="EMBL/GenBank/DDBJ databases">
        <title>Yersinia pestis Nepal516A whole genome shotgun sequencing project.</title>
        <authorList>
            <person name="Plunkett G. III"/>
            <person name="Anderson B.D."/>
            <person name="Baumler D.J."/>
            <person name="Burland V."/>
            <person name="Cabot E.L."/>
            <person name="Glasner J.D."/>
            <person name="Mau B."/>
            <person name="Neeno-Eckwall E."/>
            <person name="Perna N.T."/>
            <person name="Munk A.C."/>
            <person name="Tapia R."/>
            <person name="Green L.D."/>
            <person name="Rogers Y.C."/>
            <person name="Detter J.C."/>
            <person name="Bruce D.C."/>
            <person name="Brettin T.S."/>
        </authorList>
    </citation>
    <scope>NUCLEOTIDE SEQUENCE [LARGE SCALE GENOMIC DNA]</scope>
    <source>
        <strain>Nepal516</strain>
    </source>
</reference>
<protein>
    <recommendedName>
        <fullName evidence="1">3-deoxy-manno-octulosonate cytidylyltransferase</fullName>
        <ecNumber evidence="1">2.7.7.38</ecNumber>
    </recommendedName>
    <alternativeName>
        <fullName evidence="1">CMP-2-keto-3-deoxyoctulosonic acid synthase</fullName>
        <shortName evidence="1">CKS</shortName>
        <shortName evidence="1">CMP-KDO synthase</shortName>
    </alternativeName>
</protein>
<keyword id="KW-0963">Cytoplasm</keyword>
<keyword id="KW-0448">Lipopolysaccharide biosynthesis</keyword>
<keyword id="KW-0548">Nucleotidyltransferase</keyword>
<keyword id="KW-0808">Transferase</keyword>
<evidence type="ECO:0000255" key="1">
    <source>
        <dbReference type="HAMAP-Rule" id="MF_00057"/>
    </source>
</evidence>
<feature type="chain" id="PRO_1000003392" description="3-deoxy-manno-octulosonate cytidylyltransferase">
    <location>
        <begin position="1"/>
        <end position="250"/>
    </location>
</feature>
<sequence>MSFIAIIPARYASTRLPGKPLADIAGKPMVVHVMERALASGADRVIVATDHPDVVKAVEAAGGEVCLTRADHQSGTERLAEVIEHYGFADDDIIVNVQGDEPLVPPVIIRQVADNLAACSAGMATLAVPIASSEEAFNPNAVKVVMDAQGYALYFSRATIPWERERFAQSKETIGDCFLRHIGIYAYRAGFIRRYVNWAPSQLEQIELLEQLRVLWYGEKIHVAVAKAVPAVGVDTQSDLDRVRAIMLNQ</sequence>
<accession>Q1CGH5</accession>
<accession>C4GVR8</accession>
<gene>
    <name evidence="1" type="primary">kdsB</name>
    <name type="ordered locus">YPN_2577</name>
    <name type="ORF">YP516_2903</name>
</gene>
<proteinExistence type="inferred from homology"/>
<name>KDSB_YERPN</name>
<comment type="function">
    <text evidence="1">Activates KDO (a required 8-carbon sugar) for incorporation into bacterial lipopolysaccharide in Gram-negative bacteria.</text>
</comment>
<comment type="catalytic activity">
    <reaction evidence="1">
        <text>3-deoxy-alpha-D-manno-oct-2-ulosonate + CTP = CMP-3-deoxy-beta-D-manno-octulosonate + diphosphate</text>
        <dbReference type="Rhea" id="RHEA:23448"/>
        <dbReference type="ChEBI" id="CHEBI:33019"/>
        <dbReference type="ChEBI" id="CHEBI:37563"/>
        <dbReference type="ChEBI" id="CHEBI:85986"/>
        <dbReference type="ChEBI" id="CHEBI:85987"/>
        <dbReference type="EC" id="2.7.7.38"/>
    </reaction>
</comment>
<comment type="pathway">
    <text evidence="1">Nucleotide-sugar biosynthesis; CMP-3-deoxy-D-manno-octulosonate biosynthesis; CMP-3-deoxy-D-manno-octulosonate from 3-deoxy-D-manno-octulosonate and CTP: step 1/1.</text>
</comment>
<comment type="pathway">
    <text evidence="1">Bacterial outer membrane biogenesis; lipopolysaccharide biosynthesis.</text>
</comment>
<comment type="subcellular location">
    <subcellularLocation>
        <location evidence="1">Cytoplasm</location>
    </subcellularLocation>
</comment>
<comment type="similarity">
    <text evidence="1">Belongs to the KdsB family.</text>
</comment>
<dbReference type="EC" id="2.7.7.38" evidence="1"/>
<dbReference type="EMBL" id="CP000305">
    <property type="protein sequence ID" value="ABG18905.1"/>
    <property type="molecule type" value="Genomic_DNA"/>
</dbReference>
<dbReference type="EMBL" id="ACNQ01000017">
    <property type="protein sequence ID" value="EEO75018.1"/>
    <property type="molecule type" value="Genomic_DNA"/>
</dbReference>
<dbReference type="RefSeq" id="WP_002211314.1">
    <property type="nucleotide sequence ID" value="NZ_ACNQ01000017.1"/>
</dbReference>
<dbReference type="SMR" id="Q1CGH5"/>
<dbReference type="GeneID" id="57977196"/>
<dbReference type="KEGG" id="ypn:YPN_2577"/>
<dbReference type="HOGENOM" id="CLU_065038_1_0_6"/>
<dbReference type="UniPathway" id="UPA00030"/>
<dbReference type="UniPathway" id="UPA00358">
    <property type="reaction ID" value="UER00476"/>
</dbReference>
<dbReference type="Proteomes" id="UP000008936">
    <property type="component" value="Chromosome"/>
</dbReference>
<dbReference type="GO" id="GO:0005829">
    <property type="term" value="C:cytosol"/>
    <property type="evidence" value="ECO:0007669"/>
    <property type="project" value="TreeGrafter"/>
</dbReference>
<dbReference type="GO" id="GO:0008690">
    <property type="term" value="F:3-deoxy-manno-octulosonate cytidylyltransferase activity"/>
    <property type="evidence" value="ECO:0007669"/>
    <property type="project" value="UniProtKB-UniRule"/>
</dbReference>
<dbReference type="GO" id="GO:0033468">
    <property type="term" value="P:CMP-keto-3-deoxy-D-manno-octulosonic acid biosynthetic process"/>
    <property type="evidence" value="ECO:0007669"/>
    <property type="project" value="UniProtKB-UniRule"/>
</dbReference>
<dbReference type="GO" id="GO:0009103">
    <property type="term" value="P:lipopolysaccharide biosynthetic process"/>
    <property type="evidence" value="ECO:0007669"/>
    <property type="project" value="UniProtKB-UniRule"/>
</dbReference>
<dbReference type="CDD" id="cd02517">
    <property type="entry name" value="CMP-KDO-Synthetase"/>
    <property type="match status" value="1"/>
</dbReference>
<dbReference type="FunFam" id="3.90.550.10:FF:000011">
    <property type="entry name" value="3-deoxy-manno-octulosonate cytidylyltransferase"/>
    <property type="match status" value="1"/>
</dbReference>
<dbReference type="Gene3D" id="3.90.550.10">
    <property type="entry name" value="Spore Coat Polysaccharide Biosynthesis Protein SpsA, Chain A"/>
    <property type="match status" value="1"/>
</dbReference>
<dbReference type="HAMAP" id="MF_00057">
    <property type="entry name" value="KdsB"/>
    <property type="match status" value="1"/>
</dbReference>
<dbReference type="InterPro" id="IPR003329">
    <property type="entry name" value="Cytidylyl_trans"/>
</dbReference>
<dbReference type="InterPro" id="IPR004528">
    <property type="entry name" value="KdsB"/>
</dbReference>
<dbReference type="InterPro" id="IPR029044">
    <property type="entry name" value="Nucleotide-diphossugar_trans"/>
</dbReference>
<dbReference type="NCBIfam" id="TIGR00466">
    <property type="entry name" value="kdsB"/>
    <property type="match status" value="1"/>
</dbReference>
<dbReference type="NCBIfam" id="NF003950">
    <property type="entry name" value="PRK05450.1-3"/>
    <property type="match status" value="1"/>
</dbReference>
<dbReference type="NCBIfam" id="NF003952">
    <property type="entry name" value="PRK05450.1-5"/>
    <property type="match status" value="1"/>
</dbReference>
<dbReference type="NCBIfam" id="NF009905">
    <property type="entry name" value="PRK13368.1"/>
    <property type="match status" value="1"/>
</dbReference>
<dbReference type="PANTHER" id="PTHR42866">
    <property type="entry name" value="3-DEOXY-MANNO-OCTULOSONATE CYTIDYLYLTRANSFERASE"/>
    <property type="match status" value="1"/>
</dbReference>
<dbReference type="PANTHER" id="PTHR42866:SF2">
    <property type="entry name" value="3-DEOXY-MANNO-OCTULOSONATE CYTIDYLYLTRANSFERASE, MITOCHONDRIAL"/>
    <property type="match status" value="1"/>
</dbReference>
<dbReference type="Pfam" id="PF02348">
    <property type="entry name" value="CTP_transf_3"/>
    <property type="match status" value="1"/>
</dbReference>
<dbReference type="SUPFAM" id="SSF53448">
    <property type="entry name" value="Nucleotide-diphospho-sugar transferases"/>
    <property type="match status" value="1"/>
</dbReference>